<name>RECR_HAMD5</name>
<accession>C4K7W2</accession>
<comment type="function">
    <text evidence="1">May play a role in DNA repair. It seems to be involved in an RecBC-independent recombinational process of DNA repair. It may act with RecF and RecO.</text>
</comment>
<comment type="similarity">
    <text evidence="1">Belongs to the RecR family.</text>
</comment>
<dbReference type="EMBL" id="CP001277">
    <property type="protein sequence ID" value="ACQ68655.1"/>
    <property type="molecule type" value="Genomic_DNA"/>
</dbReference>
<dbReference type="RefSeq" id="WP_015874400.1">
    <property type="nucleotide sequence ID" value="NC_012751.1"/>
</dbReference>
<dbReference type="SMR" id="C4K7W2"/>
<dbReference type="STRING" id="572265.HDEF_2089"/>
<dbReference type="GeneID" id="66261630"/>
<dbReference type="KEGG" id="hde:HDEF_2089"/>
<dbReference type="eggNOG" id="COG0353">
    <property type="taxonomic scope" value="Bacteria"/>
</dbReference>
<dbReference type="HOGENOM" id="CLU_060739_1_2_6"/>
<dbReference type="Proteomes" id="UP000002334">
    <property type="component" value="Chromosome"/>
</dbReference>
<dbReference type="GO" id="GO:0003677">
    <property type="term" value="F:DNA binding"/>
    <property type="evidence" value="ECO:0007669"/>
    <property type="project" value="UniProtKB-UniRule"/>
</dbReference>
<dbReference type="GO" id="GO:0008270">
    <property type="term" value="F:zinc ion binding"/>
    <property type="evidence" value="ECO:0007669"/>
    <property type="project" value="UniProtKB-KW"/>
</dbReference>
<dbReference type="GO" id="GO:0006310">
    <property type="term" value="P:DNA recombination"/>
    <property type="evidence" value="ECO:0007669"/>
    <property type="project" value="UniProtKB-UniRule"/>
</dbReference>
<dbReference type="GO" id="GO:0006281">
    <property type="term" value="P:DNA repair"/>
    <property type="evidence" value="ECO:0007669"/>
    <property type="project" value="UniProtKB-UniRule"/>
</dbReference>
<dbReference type="CDD" id="cd01025">
    <property type="entry name" value="TOPRIM_recR"/>
    <property type="match status" value="1"/>
</dbReference>
<dbReference type="FunFam" id="3.40.1360.10:FF:000001">
    <property type="entry name" value="Recombination protein RecR"/>
    <property type="match status" value="1"/>
</dbReference>
<dbReference type="Gene3D" id="3.40.1360.10">
    <property type="match status" value="1"/>
</dbReference>
<dbReference type="Gene3D" id="6.10.250.240">
    <property type="match status" value="1"/>
</dbReference>
<dbReference type="Gene3D" id="1.10.8.420">
    <property type="entry name" value="RecR Domain 1"/>
    <property type="match status" value="1"/>
</dbReference>
<dbReference type="HAMAP" id="MF_00017">
    <property type="entry name" value="RecR"/>
    <property type="match status" value="1"/>
</dbReference>
<dbReference type="InterPro" id="IPR000093">
    <property type="entry name" value="DNA_Rcmb_RecR"/>
</dbReference>
<dbReference type="InterPro" id="IPR023627">
    <property type="entry name" value="Rcmb_RecR"/>
</dbReference>
<dbReference type="InterPro" id="IPR015967">
    <property type="entry name" value="Rcmb_RecR_Znf"/>
</dbReference>
<dbReference type="InterPro" id="IPR006171">
    <property type="entry name" value="TOPRIM_dom"/>
</dbReference>
<dbReference type="InterPro" id="IPR034137">
    <property type="entry name" value="TOPRIM_RecR"/>
</dbReference>
<dbReference type="NCBIfam" id="TIGR00615">
    <property type="entry name" value="recR"/>
    <property type="match status" value="1"/>
</dbReference>
<dbReference type="PANTHER" id="PTHR30446">
    <property type="entry name" value="RECOMBINATION PROTEIN RECR"/>
    <property type="match status" value="1"/>
</dbReference>
<dbReference type="PANTHER" id="PTHR30446:SF0">
    <property type="entry name" value="RECOMBINATION PROTEIN RECR"/>
    <property type="match status" value="1"/>
</dbReference>
<dbReference type="Pfam" id="PF21175">
    <property type="entry name" value="RecR_C"/>
    <property type="match status" value="1"/>
</dbReference>
<dbReference type="Pfam" id="PF21176">
    <property type="entry name" value="RecR_HhH"/>
    <property type="match status" value="1"/>
</dbReference>
<dbReference type="Pfam" id="PF02132">
    <property type="entry name" value="RecR_ZnF"/>
    <property type="match status" value="1"/>
</dbReference>
<dbReference type="Pfam" id="PF13662">
    <property type="entry name" value="Toprim_4"/>
    <property type="match status" value="1"/>
</dbReference>
<dbReference type="SMART" id="SM00493">
    <property type="entry name" value="TOPRIM"/>
    <property type="match status" value="1"/>
</dbReference>
<dbReference type="SUPFAM" id="SSF111304">
    <property type="entry name" value="Recombination protein RecR"/>
    <property type="match status" value="1"/>
</dbReference>
<dbReference type="PROSITE" id="PS50880">
    <property type="entry name" value="TOPRIM"/>
    <property type="match status" value="1"/>
</dbReference>
<keyword id="KW-0227">DNA damage</keyword>
<keyword id="KW-0233">DNA recombination</keyword>
<keyword id="KW-0234">DNA repair</keyword>
<keyword id="KW-0479">Metal-binding</keyword>
<keyword id="KW-0862">Zinc</keyword>
<keyword id="KW-0863">Zinc-finger</keyword>
<reference key="1">
    <citation type="journal article" date="2009" name="Proc. Natl. Acad. Sci. U.S.A.">
        <title>Hamiltonella defensa, genome evolution of protective bacterial endosymbiont from pathogenic ancestors.</title>
        <authorList>
            <person name="Degnan P.H."/>
            <person name="Yu Y."/>
            <person name="Sisneros N."/>
            <person name="Wing R.A."/>
            <person name="Moran N.A."/>
        </authorList>
    </citation>
    <scope>NUCLEOTIDE SEQUENCE [LARGE SCALE GENOMIC DNA]</scope>
    <source>
        <strain>5AT</strain>
    </source>
</reference>
<protein>
    <recommendedName>
        <fullName evidence="1">Recombination protein RecR</fullName>
    </recommendedName>
</protein>
<sequence>MQTSLVIEALMESLRHLPGVGPKSAQRMAFYLLQSDRSKGIRLAESLLKAMSEIGHCGVCRTFTEQPCCDICSNVYREKMGQICVVESPSDICAIEQTGQFSGRYFVLMGRLSPLDGIGPDDIGLPLLEHRLSTEPIKEVILAMNPTVEGEATSNYIAQMCEEYGISTTKIAHGVPIGGDLEMVDETTLSHALVGRRPMNFN</sequence>
<organism>
    <name type="scientific">Hamiltonella defensa subsp. Acyrthosiphon pisum (strain 5AT)</name>
    <dbReference type="NCBI Taxonomy" id="572265"/>
    <lineage>
        <taxon>Bacteria</taxon>
        <taxon>Pseudomonadati</taxon>
        <taxon>Pseudomonadota</taxon>
        <taxon>Gammaproteobacteria</taxon>
        <taxon>Enterobacterales</taxon>
        <taxon>Enterobacteriaceae</taxon>
        <taxon>aphid secondary symbionts</taxon>
        <taxon>Candidatus Hamiltonella</taxon>
    </lineage>
</organism>
<evidence type="ECO:0000255" key="1">
    <source>
        <dbReference type="HAMAP-Rule" id="MF_00017"/>
    </source>
</evidence>
<gene>
    <name evidence="1" type="primary">recR</name>
    <name type="ordered locus">HDEF_2089</name>
</gene>
<feature type="chain" id="PRO_1000201864" description="Recombination protein RecR">
    <location>
        <begin position="1"/>
        <end position="202"/>
    </location>
</feature>
<feature type="domain" description="Toprim" evidence="1">
    <location>
        <begin position="81"/>
        <end position="176"/>
    </location>
</feature>
<feature type="zinc finger region" description="C4-type" evidence="1">
    <location>
        <begin position="57"/>
        <end position="72"/>
    </location>
</feature>
<proteinExistence type="inferred from homology"/>